<dbReference type="EMBL" id="L42023">
    <property type="protein sequence ID" value="AAC21969.1"/>
    <property type="molecule type" value="Genomic_DNA"/>
</dbReference>
<dbReference type="PIR" id="G64005">
    <property type="entry name" value="G64005"/>
</dbReference>
<dbReference type="RefSeq" id="NP_438471.1">
    <property type="nucleotide sequence ID" value="NC_000907.1"/>
</dbReference>
<dbReference type="SMR" id="P43980"/>
<dbReference type="STRING" id="71421.HI_0304"/>
<dbReference type="EnsemblBacteria" id="AAC21969">
    <property type="protein sequence ID" value="AAC21969"/>
    <property type="gene ID" value="HI_0304"/>
</dbReference>
<dbReference type="KEGG" id="hin:HI_0304"/>
<dbReference type="PATRIC" id="fig|71421.8.peg.321"/>
<dbReference type="eggNOG" id="COG1678">
    <property type="taxonomic scope" value="Bacteria"/>
</dbReference>
<dbReference type="HOGENOM" id="CLU_057596_1_0_6"/>
<dbReference type="OrthoDB" id="9807486at2"/>
<dbReference type="PhylomeDB" id="P43980"/>
<dbReference type="BioCyc" id="HINF71421:G1GJ1-322-MONOMER"/>
<dbReference type="Proteomes" id="UP000000579">
    <property type="component" value="Chromosome"/>
</dbReference>
<dbReference type="GO" id="GO:0005829">
    <property type="term" value="C:cytosol"/>
    <property type="evidence" value="ECO:0000318"/>
    <property type="project" value="GO_Central"/>
</dbReference>
<dbReference type="Gene3D" id="3.40.1740.10">
    <property type="entry name" value="VC0467-like"/>
    <property type="match status" value="1"/>
</dbReference>
<dbReference type="HAMAP" id="MF_00758">
    <property type="entry name" value="UPF0301"/>
    <property type="match status" value="1"/>
</dbReference>
<dbReference type="InterPro" id="IPR003774">
    <property type="entry name" value="AlgH-like"/>
</dbReference>
<dbReference type="NCBIfam" id="NF001266">
    <property type="entry name" value="PRK00228.1-1"/>
    <property type="match status" value="1"/>
</dbReference>
<dbReference type="PANTHER" id="PTHR30327">
    <property type="entry name" value="UNCHARACTERIZED PROTEIN YQGE"/>
    <property type="match status" value="1"/>
</dbReference>
<dbReference type="PANTHER" id="PTHR30327:SF1">
    <property type="entry name" value="UPF0301 PROTEIN YQGE"/>
    <property type="match status" value="1"/>
</dbReference>
<dbReference type="Pfam" id="PF02622">
    <property type="entry name" value="DUF179"/>
    <property type="match status" value="1"/>
</dbReference>
<dbReference type="SUPFAM" id="SSF143456">
    <property type="entry name" value="VC0467-like"/>
    <property type="match status" value="1"/>
</dbReference>
<proteinExistence type="inferred from homology"/>
<sequence length="186" mass="20921">MMELQGKFLIAMPHLDDYFNRTVVFMCEHNEQGSMGLVINQPTDLSIAELYSKLNFMMKNDRTFGNEMVVAGGPMHTERGFILHKNTLNAFQHTYKVTKELSMTTSADVVETLGSTFAPEKYLVALGCSSWGAGQLEKEIRDNAWLVVSSNDQILFDMPYEDRYAAANQLLGIHPYNFALAQVGHS</sequence>
<gene>
    <name type="ordered locus">HI_0304</name>
</gene>
<feature type="chain" id="PRO_0000214327" description="UPF0301 protein HI_0304">
    <location>
        <begin position="1"/>
        <end position="186"/>
    </location>
</feature>
<organism>
    <name type="scientific">Haemophilus influenzae (strain ATCC 51907 / DSM 11121 / KW20 / Rd)</name>
    <dbReference type="NCBI Taxonomy" id="71421"/>
    <lineage>
        <taxon>Bacteria</taxon>
        <taxon>Pseudomonadati</taxon>
        <taxon>Pseudomonadota</taxon>
        <taxon>Gammaproteobacteria</taxon>
        <taxon>Pasteurellales</taxon>
        <taxon>Pasteurellaceae</taxon>
        <taxon>Haemophilus</taxon>
    </lineage>
</organism>
<comment type="similarity">
    <text evidence="1">Belongs to the UPF0301 (AlgH) family.</text>
</comment>
<keyword id="KW-1185">Reference proteome</keyword>
<accession>P43980</accession>
<protein>
    <recommendedName>
        <fullName>UPF0301 protein HI_0304</fullName>
    </recommendedName>
</protein>
<evidence type="ECO:0000305" key="1"/>
<name>Y304_HAEIN</name>
<reference key="1">
    <citation type="journal article" date="1995" name="Science">
        <title>Whole-genome random sequencing and assembly of Haemophilus influenzae Rd.</title>
        <authorList>
            <person name="Fleischmann R.D."/>
            <person name="Adams M.D."/>
            <person name="White O."/>
            <person name="Clayton R.A."/>
            <person name="Kirkness E.F."/>
            <person name="Kerlavage A.R."/>
            <person name="Bult C.J."/>
            <person name="Tomb J.-F."/>
            <person name="Dougherty B.A."/>
            <person name="Merrick J.M."/>
            <person name="McKenney K."/>
            <person name="Sutton G.G."/>
            <person name="FitzHugh W."/>
            <person name="Fields C.A."/>
            <person name="Gocayne J.D."/>
            <person name="Scott J.D."/>
            <person name="Shirley R."/>
            <person name="Liu L.-I."/>
            <person name="Glodek A."/>
            <person name="Kelley J.M."/>
            <person name="Weidman J.F."/>
            <person name="Phillips C.A."/>
            <person name="Spriggs T."/>
            <person name="Hedblom E."/>
            <person name="Cotton M.D."/>
            <person name="Utterback T.R."/>
            <person name="Hanna M.C."/>
            <person name="Nguyen D.T."/>
            <person name="Saudek D.M."/>
            <person name="Brandon R.C."/>
            <person name="Fine L.D."/>
            <person name="Fritchman J.L."/>
            <person name="Fuhrmann J.L."/>
            <person name="Geoghagen N.S.M."/>
            <person name="Gnehm C.L."/>
            <person name="McDonald L.A."/>
            <person name="Small K.V."/>
            <person name="Fraser C.M."/>
            <person name="Smith H.O."/>
            <person name="Venter J.C."/>
        </authorList>
    </citation>
    <scope>NUCLEOTIDE SEQUENCE [LARGE SCALE GENOMIC DNA]</scope>
    <source>
        <strain>ATCC 51907 / DSM 11121 / KW20 / Rd</strain>
    </source>
</reference>